<accession>C0NYZ7</accession>
<reference key="1">
    <citation type="submission" date="2009-02" db="EMBL/GenBank/DDBJ databases">
        <title>The genome sequence of Ajellomyces capsulatus strain G186AR.</title>
        <authorList>
            <person name="Champion M."/>
            <person name="Cuomo C.A."/>
            <person name="Ma L.-J."/>
            <person name="Henn M.R."/>
            <person name="Sil A."/>
            <person name="Goldman B."/>
            <person name="Young S.K."/>
            <person name="Kodira C.D."/>
            <person name="Zeng Q."/>
            <person name="Koehrsen M."/>
            <person name="Alvarado L."/>
            <person name="Berlin A."/>
            <person name="Borenstein D."/>
            <person name="Chen Z."/>
            <person name="Engels R."/>
            <person name="Freedman E."/>
            <person name="Gellesch M."/>
            <person name="Goldberg J."/>
            <person name="Griggs A."/>
            <person name="Gujja S."/>
            <person name="Heiman D."/>
            <person name="Hepburn T."/>
            <person name="Howarth C."/>
            <person name="Jen D."/>
            <person name="Larson L."/>
            <person name="Lewis B."/>
            <person name="Mehta T."/>
            <person name="Park D."/>
            <person name="Pearson M."/>
            <person name="Roberts A."/>
            <person name="Saif S."/>
            <person name="Shea T."/>
            <person name="Shenoy N."/>
            <person name="Sisk P."/>
            <person name="Stolte C."/>
            <person name="Sykes S."/>
            <person name="Walk T."/>
            <person name="White J."/>
            <person name="Yandava C."/>
            <person name="Klein B."/>
            <person name="McEwen J.G."/>
            <person name="Puccia R."/>
            <person name="Goldman G.H."/>
            <person name="Felipe M.S."/>
            <person name="Nino-Vega G."/>
            <person name="San-Blas G."/>
            <person name="Taylor J."/>
            <person name="Mendoza L."/>
            <person name="Galagan J.E."/>
            <person name="Nusbaum C."/>
            <person name="Birren B.W."/>
        </authorList>
    </citation>
    <scope>NUCLEOTIDE SEQUENCE [LARGE SCALE GENOMIC DNA]</scope>
    <source>
        <strain>G186AR / H82 / ATCC MYA-2454 / RMSCC 2432</strain>
    </source>
</reference>
<proteinExistence type="inferred from homology"/>
<organism>
    <name type="scientific">Ajellomyces capsulatus (strain G186AR / H82 / ATCC MYA-2454 / RMSCC 2432)</name>
    <name type="common">Darling's disease fungus</name>
    <name type="synonym">Histoplasma capsulatum</name>
    <dbReference type="NCBI Taxonomy" id="447093"/>
    <lineage>
        <taxon>Eukaryota</taxon>
        <taxon>Fungi</taxon>
        <taxon>Dikarya</taxon>
        <taxon>Ascomycota</taxon>
        <taxon>Pezizomycotina</taxon>
        <taxon>Eurotiomycetes</taxon>
        <taxon>Eurotiomycetidae</taxon>
        <taxon>Onygenales</taxon>
        <taxon>Ajellomycetaceae</taxon>
        <taxon>Histoplasma</taxon>
    </lineage>
</organism>
<dbReference type="EC" id="6.3.5.7" evidence="1"/>
<dbReference type="EMBL" id="GG663377">
    <property type="protein sequence ID" value="EEH03437.1"/>
    <property type="molecule type" value="Genomic_DNA"/>
</dbReference>
<dbReference type="RefSeq" id="XP_045283918.1">
    <property type="nucleotide sequence ID" value="XM_045435426.1"/>
</dbReference>
<dbReference type="SMR" id="C0NYZ7"/>
<dbReference type="FunCoup" id="C0NYZ7">
    <property type="interactions" value="318"/>
</dbReference>
<dbReference type="STRING" id="447093.C0NYZ7"/>
<dbReference type="GeneID" id="69041393"/>
<dbReference type="VEuPathDB" id="FungiDB:I7I50_08750"/>
<dbReference type="HOGENOM" id="CLU_009600_7_6_1"/>
<dbReference type="InParanoid" id="C0NYZ7"/>
<dbReference type="Proteomes" id="UP000001631">
    <property type="component" value="Unassembled WGS sequence"/>
</dbReference>
<dbReference type="GO" id="GO:0030956">
    <property type="term" value="C:glutamyl-tRNA(Gln) amidotransferase complex"/>
    <property type="evidence" value="ECO:0007669"/>
    <property type="project" value="UniProtKB-UniRule"/>
</dbReference>
<dbReference type="GO" id="GO:0005739">
    <property type="term" value="C:mitochondrion"/>
    <property type="evidence" value="ECO:0007669"/>
    <property type="project" value="UniProtKB-SubCell"/>
</dbReference>
<dbReference type="GO" id="GO:0005524">
    <property type="term" value="F:ATP binding"/>
    <property type="evidence" value="ECO:0007669"/>
    <property type="project" value="UniProtKB-KW"/>
</dbReference>
<dbReference type="GO" id="GO:0050567">
    <property type="term" value="F:glutaminyl-tRNA synthase (glutamine-hydrolyzing) activity"/>
    <property type="evidence" value="ECO:0007669"/>
    <property type="project" value="UniProtKB-UniRule"/>
</dbReference>
<dbReference type="GO" id="GO:0070681">
    <property type="term" value="P:glutaminyl-tRNAGln biosynthesis via transamidation"/>
    <property type="evidence" value="ECO:0007669"/>
    <property type="project" value="UniProtKB-UniRule"/>
</dbReference>
<dbReference type="GO" id="GO:0032543">
    <property type="term" value="P:mitochondrial translation"/>
    <property type="evidence" value="ECO:0007669"/>
    <property type="project" value="UniProtKB-UniRule"/>
</dbReference>
<dbReference type="Gene3D" id="3.90.1300.10">
    <property type="entry name" value="Amidase signature (AS) domain"/>
    <property type="match status" value="1"/>
</dbReference>
<dbReference type="HAMAP" id="MF_00120">
    <property type="entry name" value="GatA"/>
    <property type="match status" value="1"/>
</dbReference>
<dbReference type="InterPro" id="IPR000120">
    <property type="entry name" value="Amidase"/>
</dbReference>
<dbReference type="InterPro" id="IPR020556">
    <property type="entry name" value="Amidase_CS"/>
</dbReference>
<dbReference type="InterPro" id="IPR023631">
    <property type="entry name" value="Amidase_dom"/>
</dbReference>
<dbReference type="InterPro" id="IPR036928">
    <property type="entry name" value="AS_sf"/>
</dbReference>
<dbReference type="InterPro" id="IPR004412">
    <property type="entry name" value="GatA"/>
</dbReference>
<dbReference type="PANTHER" id="PTHR11895:SF7">
    <property type="entry name" value="GLUTAMYL-TRNA(GLN) AMIDOTRANSFERASE SUBUNIT A, MITOCHONDRIAL"/>
    <property type="match status" value="1"/>
</dbReference>
<dbReference type="PANTHER" id="PTHR11895">
    <property type="entry name" value="TRANSAMIDASE"/>
    <property type="match status" value="1"/>
</dbReference>
<dbReference type="Pfam" id="PF01425">
    <property type="entry name" value="Amidase"/>
    <property type="match status" value="1"/>
</dbReference>
<dbReference type="SUPFAM" id="SSF75304">
    <property type="entry name" value="Amidase signature (AS) enzymes"/>
    <property type="match status" value="1"/>
</dbReference>
<dbReference type="PROSITE" id="PS00571">
    <property type="entry name" value="AMIDASES"/>
    <property type="match status" value="1"/>
</dbReference>
<gene>
    <name type="ORF">HCBG_08377</name>
</gene>
<keyword id="KW-0067">ATP-binding</keyword>
<keyword id="KW-0436">Ligase</keyword>
<keyword id="KW-0496">Mitochondrion</keyword>
<keyword id="KW-0547">Nucleotide-binding</keyword>
<keyword id="KW-0648">Protein biosynthesis</keyword>
<keyword id="KW-1185">Reference proteome</keyword>
<comment type="function">
    <text evidence="1">Allows the formation of correctly charged Gln-tRNA(Gln) through the transamidation of misacylated Glu-tRNA(Gln) in the mitochondria. The reaction takes place in the presence of glutamine and ATP through an activated gamma-phospho-Glu-tRNA(Gln).</text>
</comment>
<comment type="catalytic activity">
    <reaction evidence="1">
        <text>L-glutamyl-tRNA(Gln) + L-glutamine + ATP + H2O = L-glutaminyl-tRNA(Gln) + L-glutamate + ADP + phosphate + H(+)</text>
        <dbReference type="Rhea" id="RHEA:17521"/>
        <dbReference type="Rhea" id="RHEA-COMP:9681"/>
        <dbReference type="Rhea" id="RHEA-COMP:9684"/>
        <dbReference type="ChEBI" id="CHEBI:15377"/>
        <dbReference type="ChEBI" id="CHEBI:15378"/>
        <dbReference type="ChEBI" id="CHEBI:29985"/>
        <dbReference type="ChEBI" id="CHEBI:30616"/>
        <dbReference type="ChEBI" id="CHEBI:43474"/>
        <dbReference type="ChEBI" id="CHEBI:58359"/>
        <dbReference type="ChEBI" id="CHEBI:78520"/>
        <dbReference type="ChEBI" id="CHEBI:78521"/>
        <dbReference type="ChEBI" id="CHEBI:456216"/>
        <dbReference type="EC" id="6.3.5.7"/>
    </reaction>
</comment>
<comment type="subunit">
    <text evidence="1">Subunit of the heterotrimeric GatCAB amidotransferase (AdT) complex, composed of A, B and C subunits.</text>
</comment>
<comment type="subcellular location">
    <subcellularLocation>
        <location evidence="1">Mitochondrion</location>
    </subcellularLocation>
</comment>
<comment type="similarity">
    <text evidence="1">Belongs to the amidase family. GatA subfamily.</text>
</comment>
<sequence>MSLLREAEKCLANQKTYASLNAFITPLQRAGPWRDRVRDSDTRRERGVTKSPLDGKLVAIKDNICTRDMPTTCASRILDTYTSPFNATVVESLEKSGAIIAGKTNLDEFGMGSHSMHSHFGPVKNVTESRREPISPGGSSGGSAVAVATGQCYAALGTDTGGSVRLPAAYTGTVGFKPSYGHVSRWGVVAYANSLDTVGVLGSSISTIREVYKTINHPDLHDPTNLPPATRTRLTAAVHNSSTTRSSPSPYLRIGIPTEYNIHELSPTVRTAWQRSIVHLQRMGHTILPVSLPATKHALAAYYVLAPAEASSNLARYDGVRYGTRDTDAPDDAEPGGYLYASSRGKGLGSEVKRRILLGAFSLSADAIDNYFLQAQRVRRLVQADFERVFRVKNPLLPAVDVDADVDGRDKKQIAGDNAGVDVLVVPTAPTLPPTVESLKRASTVETYMNDIFTVPASLAGLPALSVPVQMRGLSTVGDGDESKGDGADAAFGSVGIQAIGQFGDDEMVLHVGEMLEGMHG</sequence>
<evidence type="ECO:0000255" key="1">
    <source>
        <dbReference type="HAMAP-Rule" id="MF_03150"/>
    </source>
</evidence>
<name>GATA_AJECG</name>
<protein>
    <recommendedName>
        <fullName evidence="1">Glutamyl-tRNA(Gln) amidotransferase subunit A, mitochondrial</fullName>
        <shortName evidence="1">Glu-AdT subunit A</shortName>
        <ecNumber evidence="1">6.3.5.7</ecNumber>
    </recommendedName>
</protein>
<feature type="chain" id="PRO_0000413346" description="Glutamyl-tRNA(Gln) amidotransferase subunit A, mitochondrial">
    <location>
        <begin position="1"/>
        <end position="521"/>
    </location>
</feature>
<feature type="active site" description="Charge relay system" evidence="1">
    <location>
        <position position="61"/>
    </location>
</feature>
<feature type="active site" description="Charge relay system" evidence="1">
    <location>
        <position position="139"/>
    </location>
</feature>
<feature type="active site" description="Acyl-ester intermediate" evidence="1">
    <location>
        <position position="163"/>
    </location>
</feature>